<organism>
    <name type="scientific">Illicium oligandrum</name>
    <name type="common">Star anise</name>
    <dbReference type="NCBI Taxonomy" id="145286"/>
    <lineage>
        <taxon>Eukaryota</taxon>
        <taxon>Viridiplantae</taxon>
        <taxon>Streptophyta</taxon>
        <taxon>Embryophyta</taxon>
        <taxon>Tracheophyta</taxon>
        <taxon>Spermatophyta</taxon>
        <taxon>Magnoliopsida</taxon>
        <taxon>Austrobaileyales</taxon>
        <taxon>Schisandraceae</taxon>
        <taxon>Illicium</taxon>
    </lineage>
</organism>
<comment type="function">
    <text evidence="1">Key component of the proton channel; it plays a direct role in the translocation of protons across the membrane.</text>
</comment>
<comment type="subunit">
    <text evidence="1">F-type ATPases have 2 components, CF(1) - the catalytic core - and CF(0) - the membrane proton channel. CF(1) has five subunits: alpha(3), beta(3), gamma(1), delta(1), epsilon(1). CF(0) has four main subunits: a, b, b' and c.</text>
</comment>
<comment type="subcellular location">
    <subcellularLocation>
        <location evidence="1">Plastid</location>
        <location evidence="1">Chloroplast thylakoid membrane</location>
        <topology evidence="1">Multi-pass membrane protein</topology>
    </subcellularLocation>
</comment>
<comment type="similarity">
    <text evidence="1">Belongs to the ATPase A chain family.</text>
</comment>
<reference key="1">
    <citation type="journal article" date="2007" name="Mol. Phylogenet. Evol.">
        <title>Phylogenetic and evolutionary implications of complete chloroplast genome sequences of four early-diverging angiosperms: Buxus (Buxaceae), Chloranthus (Chloranthaceae), Dioscorea (Dioscoreaceae), and Illicium (Schisandraceae).</title>
        <authorList>
            <person name="Hansen D.R."/>
            <person name="Dastidar S.G."/>
            <person name="Cai Z."/>
            <person name="Penaflor C."/>
            <person name="Kuehl J.V."/>
            <person name="Boore J.L."/>
            <person name="Jansen R.K."/>
        </authorList>
    </citation>
    <scope>NUCLEOTIDE SEQUENCE [LARGE SCALE GENOMIC DNA]</scope>
</reference>
<protein>
    <recommendedName>
        <fullName evidence="1">ATP synthase subunit a, chloroplastic</fullName>
    </recommendedName>
    <alternativeName>
        <fullName evidence="1">ATP synthase F0 sector subunit a</fullName>
    </alternativeName>
    <alternativeName>
        <fullName evidence="1">F-ATPase subunit IV</fullName>
    </alternativeName>
</protein>
<dbReference type="EMBL" id="EF380354">
    <property type="protein sequence ID" value="ABQ52507.1"/>
    <property type="molecule type" value="Genomic_DNA"/>
</dbReference>
<dbReference type="RefSeq" id="YP_001294258.1">
    <property type="nucleotide sequence ID" value="NC_009600.1"/>
</dbReference>
<dbReference type="SMR" id="A6MMT2"/>
<dbReference type="GeneID" id="5236789"/>
<dbReference type="GO" id="GO:0009535">
    <property type="term" value="C:chloroplast thylakoid membrane"/>
    <property type="evidence" value="ECO:0007669"/>
    <property type="project" value="UniProtKB-SubCell"/>
</dbReference>
<dbReference type="GO" id="GO:0005886">
    <property type="term" value="C:plasma membrane"/>
    <property type="evidence" value="ECO:0007669"/>
    <property type="project" value="UniProtKB-UniRule"/>
</dbReference>
<dbReference type="GO" id="GO:0045259">
    <property type="term" value="C:proton-transporting ATP synthase complex"/>
    <property type="evidence" value="ECO:0007669"/>
    <property type="project" value="UniProtKB-KW"/>
</dbReference>
<dbReference type="GO" id="GO:0046933">
    <property type="term" value="F:proton-transporting ATP synthase activity, rotational mechanism"/>
    <property type="evidence" value="ECO:0007669"/>
    <property type="project" value="UniProtKB-UniRule"/>
</dbReference>
<dbReference type="CDD" id="cd00310">
    <property type="entry name" value="ATP-synt_Fo_a_6"/>
    <property type="match status" value="1"/>
</dbReference>
<dbReference type="FunFam" id="1.20.120.220:FF:000001">
    <property type="entry name" value="ATP synthase subunit a, chloroplastic"/>
    <property type="match status" value="1"/>
</dbReference>
<dbReference type="Gene3D" id="1.20.120.220">
    <property type="entry name" value="ATP synthase, F0 complex, subunit A"/>
    <property type="match status" value="1"/>
</dbReference>
<dbReference type="HAMAP" id="MF_01393">
    <property type="entry name" value="ATP_synth_a_bact"/>
    <property type="match status" value="1"/>
</dbReference>
<dbReference type="InterPro" id="IPR045082">
    <property type="entry name" value="ATP_syn_F0_a_bact/chloroplast"/>
</dbReference>
<dbReference type="InterPro" id="IPR000568">
    <property type="entry name" value="ATP_synth_F0_asu"/>
</dbReference>
<dbReference type="InterPro" id="IPR023011">
    <property type="entry name" value="ATP_synth_F0_asu_AS"/>
</dbReference>
<dbReference type="InterPro" id="IPR035908">
    <property type="entry name" value="F0_ATP_A_sf"/>
</dbReference>
<dbReference type="NCBIfam" id="TIGR01131">
    <property type="entry name" value="ATP_synt_6_or_A"/>
    <property type="match status" value="1"/>
</dbReference>
<dbReference type="PANTHER" id="PTHR42823">
    <property type="entry name" value="ATP SYNTHASE SUBUNIT A, CHLOROPLASTIC"/>
    <property type="match status" value="1"/>
</dbReference>
<dbReference type="PANTHER" id="PTHR42823:SF3">
    <property type="entry name" value="ATP SYNTHASE SUBUNIT A, CHLOROPLASTIC"/>
    <property type="match status" value="1"/>
</dbReference>
<dbReference type="Pfam" id="PF00119">
    <property type="entry name" value="ATP-synt_A"/>
    <property type="match status" value="1"/>
</dbReference>
<dbReference type="PRINTS" id="PR00123">
    <property type="entry name" value="ATPASEA"/>
</dbReference>
<dbReference type="SUPFAM" id="SSF81336">
    <property type="entry name" value="F1F0 ATP synthase subunit A"/>
    <property type="match status" value="1"/>
</dbReference>
<dbReference type="PROSITE" id="PS00449">
    <property type="entry name" value="ATPASE_A"/>
    <property type="match status" value="1"/>
</dbReference>
<feature type="chain" id="PRO_0000362562" description="ATP synthase subunit a, chloroplastic">
    <location>
        <begin position="1"/>
        <end position="247"/>
    </location>
</feature>
<feature type="transmembrane region" description="Helical" evidence="1">
    <location>
        <begin position="38"/>
        <end position="58"/>
    </location>
</feature>
<feature type="transmembrane region" description="Helical" evidence="1">
    <location>
        <begin position="95"/>
        <end position="115"/>
    </location>
</feature>
<feature type="transmembrane region" description="Helical" evidence="1">
    <location>
        <begin position="134"/>
        <end position="154"/>
    </location>
</feature>
<feature type="transmembrane region" description="Helical" evidence="1">
    <location>
        <begin position="199"/>
        <end position="219"/>
    </location>
</feature>
<feature type="transmembrane region" description="Helical" evidence="1">
    <location>
        <begin position="220"/>
        <end position="240"/>
    </location>
</feature>
<accession>A6MMT2</accession>
<keyword id="KW-0066">ATP synthesis</keyword>
<keyword id="KW-0138">CF(0)</keyword>
<keyword id="KW-0150">Chloroplast</keyword>
<keyword id="KW-0375">Hydrogen ion transport</keyword>
<keyword id="KW-0406">Ion transport</keyword>
<keyword id="KW-0472">Membrane</keyword>
<keyword id="KW-0934">Plastid</keyword>
<keyword id="KW-0793">Thylakoid</keyword>
<keyword id="KW-0812">Transmembrane</keyword>
<keyword id="KW-1133">Transmembrane helix</keyword>
<keyword id="KW-0813">Transport</keyword>
<evidence type="ECO:0000255" key="1">
    <source>
        <dbReference type="HAMAP-Rule" id="MF_01393"/>
    </source>
</evidence>
<sequence length="247" mass="27105">MNVLPCSINTLKGLYEISGVEVGQHFYWQIGGFQVHAQVLITSWVVIAILLGSAAIAVRNPQTIPTDGQNFFEYVLEFIRDLSKTQIGEEYGPWVPFIGTMFLFIFVSNWSGALLPWKIIQLPHGELAAPTNDINTTVALALPTSVAYFYAGLTKKGLGYFGKYIQPTPILLPINILEDFTKPLSLSFRLFGNILADELVVVVLVSLVPSVVPIPVMFLGLFTSSIQALIFATLAAAYIGESMEGHH</sequence>
<name>ATPI_ILLOL</name>
<gene>
    <name evidence="1" type="primary">atpI</name>
</gene>
<geneLocation type="chloroplast"/>
<proteinExistence type="inferred from homology"/>